<reference key="1">
    <citation type="journal article" date="1997" name="Electrophoresis">
        <title>HSC-2DPAGE and the two-dimensional gel electrophoresis database of dog heart proteins.</title>
        <authorList>
            <person name="Dunn M.J."/>
            <person name="Corbett J.M."/>
            <person name="Wheeler C.H."/>
        </authorList>
    </citation>
    <scope>PROTEIN SEQUENCE</scope>
    <source>
        <tissue>Heart</tissue>
    </source>
</reference>
<feature type="chain" id="PRO_0000091471" description="Elongation factor Tu, mitochondrial">
    <location>
        <begin position="1"/>
        <end position="14" status="greater than"/>
    </location>
</feature>
<feature type="non-terminal residue">
    <location>
        <position position="14"/>
    </location>
</feature>
<dbReference type="EC" id="3.6.5.3" evidence="1"/>
<dbReference type="FunCoup" id="P54835">
    <property type="interactions" value="1553"/>
</dbReference>
<dbReference type="SwissPalm" id="P54835"/>
<dbReference type="InParanoid" id="P54835"/>
<dbReference type="OrthoDB" id="2067at2759"/>
<dbReference type="Proteomes" id="UP000002254">
    <property type="component" value="Unplaced"/>
</dbReference>
<dbReference type="Proteomes" id="UP000694429">
    <property type="component" value="Unplaced"/>
</dbReference>
<dbReference type="Proteomes" id="UP000694542">
    <property type="component" value="Unplaced"/>
</dbReference>
<dbReference type="Proteomes" id="UP000805418">
    <property type="component" value="Unplaced"/>
</dbReference>
<dbReference type="GO" id="GO:0005739">
    <property type="term" value="C:mitochondrion"/>
    <property type="evidence" value="ECO:0000250"/>
    <property type="project" value="UniProtKB"/>
</dbReference>
<dbReference type="GO" id="GO:0005525">
    <property type="term" value="F:GTP binding"/>
    <property type="evidence" value="ECO:0000250"/>
    <property type="project" value="UniProtKB"/>
</dbReference>
<dbReference type="GO" id="GO:0003924">
    <property type="term" value="F:GTPase activity"/>
    <property type="evidence" value="ECO:0000250"/>
    <property type="project" value="UniProtKB"/>
</dbReference>
<dbReference type="GO" id="GO:0000287">
    <property type="term" value="F:magnesium ion binding"/>
    <property type="evidence" value="ECO:0000250"/>
    <property type="project" value="UniProtKB"/>
</dbReference>
<dbReference type="GO" id="GO:0003746">
    <property type="term" value="F:translation elongation factor activity"/>
    <property type="evidence" value="ECO:0000250"/>
    <property type="project" value="UniProtKB"/>
</dbReference>
<dbReference type="GO" id="GO:0006414">
    <property type="term" value="P:translational elongation"/>
    <property type="evidence" value="ECO:0000250"/>
    <property type="project" value="UniProtKB"/>
</dbReference>
<accession>P54835</accession>
<name>EFTU_CANLF</name>
<comment type="function">
    <text evidence="2">GTP hydrolase that promotes the GTP-dependent binding of aminoacyl-tRNA to the A-site of ribosomes during protein biosynthesis.</text>
</comment>
<comment type="catalytic activity">
    <reaction evidence="1">
        <text>GTP + H2O = GDP + phosphate + H(+)</text>
        <dbReference type="Rhea" id="RHEA:19669"/>
        <dbReference type="ChEBI" id="CHEBI:15377"/>
        <dbReference type="ChEBI" id="CHEBI:15378"/>
        <dbReference type="ChEBI" id="CHEBI:37565"/>
        <dbReference type="ChEBI" id="CHEBI:43474"/>
        <dbReference type="ChEBI" id="CHEBI:58189"/>
        <dbReference type="EC" id="3.6.5.3"/>
    </reaction>
    <physiologicalReaction direction="left-to-right" evidence="1">
        <dbReference type="Rhea" id="RHEA:19670"/>
    </physiologicalReaction>
</comment>
<comment type="subcellular location">
    <subcellularLocation>
        <location evidence="2">Mitochondrion</location>
    </subcellularLocation>
</comment>
<comment type="similarity">
    <text evidence="3">Belongs to the GTP-binding elongation factor family. EF-Tu/EF-1A subfamily.</text>
</comment>
<sequence length="14" mass="1601">AVEAXKTYVRDKPI</sequence>
<organism>
    <name type="scientific">Canis lupus familiaris</name>
    <name type="common">Dog</name>
    <name type="synonym">Canis familiaris</name>
    <dbReference type="NCBI Taxonomy" id="9615"/>
    <lineage>
        <taxon>Eukaryota</taxon>
        <taxon>Metazoa</taxon>
        <taxon>Chordata</taxon>
        <taxon>Craniata</taxon>
        <taxon>Vertebrata</taxon>
        <taxon>Euteleostomi</taxon>
        <taxon>Mammalia</taxon>
        <taxon>Eutheria</taxon>
        <taxon>Laurasiatheria</taxon>
        <taxon>Carnivora</taxon>
        <taxon>Caniformia</taxon>
        <taxon>Canidae</taxon>
        <taxon>Canis</taxon>
    </lineage>
</organism>
<protein>
    <recommendedName>
        <fullName>Elongation factor Tu, mitochondrial</fullName>
        <shortName>EF-Tu</shortName>
        <ecNumber evidence="1">3.6.5.3</ecNumber>
    </recommendedName>
</protein>
<proteinExistence type="evidence at protein level"/>
<gene>
    <name type="primary">TUFM</name>
</gene>
<evidence type="ECO:0000250" key="1">
    <source>
        <dbReference type="UniProtKB" id="P0CE47"/>
    </source>
</evidence>
<evidence type="ECO:0000250" key="2">
    <source>
        <dbReference type="UniProtKB" id="P49411"/>
    </source>
</evidence>
<evidence type="ECO:0000305" key="3"/>
<keyword id="KW-0903">Direct protein sequencing</keyword>
<keyword id="KW-0251">Elongation factor</keyword>
<keyword id="KW-0342">GTP-binding</keyword>
<keyword id="KW-0378">Hydrolase</keyword>
<keyword id="KW-0460">Magnesium</keyword>
<keyword id="KW-0479">Metal-binding</keyword>
<keyword id="KW-0496">Mitochondrion</keyword>
<keyword id="KW-0547">Nucleotide-binding</keyword>
<keyword id="KW-0648">Protein biosynthesis</keyword>
<keyword id="KW-1185">Reference proteome</keyword>